<comment type="similarity">
    <text evidence="1">Belongs to the universal ribosomal protein uL29 family.</text>
</comment>
<dbReference type="EMBL" id="AE017245">
    <property type="protein sequence ID" value="AAZ44042.1"/>
    <property type="molecule type" value="Genomic_DNA"/>
</dbReference>
<dbReference type="RefSeq" id="WP_011283771.1">
    <property type="nucleotide sequence ID" value="NC_007294.1"/>
</dbReference>
<dbReference type="SMR" id="Q4A5C9"/>
<dbReference type="STRING" id="262723.MS53_0635"/>
<dbReference type="GeneID" id="93530425"/>
<dbReference type="KEGG" id="msy:MS53_0635"/>
<dbReference type="eggNOG" id="COG0255">
    <property type="taxonomic scope" value="Bacteria"/>
</dbReference>
<dbReference type="HOGENOM" id="CLU_158491_7_0_14"/>
<dbReference type="OrthoDB" id="9815192at2"/>
<dbReference type="Proteomes" id="UP000000549">
    <property type="component" value="Chromosome"/>
</dbReference>
<dbReference type="GO" id="GO:0022625">
    <property type="term" value="C:cytosolic large ribosomal subunit"/>
    <property type="evidence" value="ECO:0007669"/>
    <property type="project" value="TreeGrafter"/>
</dbReference>
<dbReference type="GO" id="GO:0003735">
    <property type="term" value="F:structural constituent of ribosome"/>
    <property type="evidence" value="ECO:0007669"/>
    <property type="project" value="InterPro"/>
</dbReference>
<dbReference type="GO" id="GO:0006412">
    <property type="term" value="P:translation"/>
    <property type="evidence" value="ECO:0007669"/>
    <property type="project" value="UniProtKB-UniRule"/>
</dbReference>
<dbReference type="CDD" id="cd00427">
    <property type="entry name" value="Ribosomal_L29_HIP"/>
    <property type="match status" value="1"/>
</dbReference>
<dbReference type="FunFam" id="1.10.287.310:FF:000001">
    <property type="entry name" value="50S ribosomal protein L29"/>
    <property type="match status" value="1"/>
</dbReference>
<dbReference type="Gene3D" id="1.10.287.310">
    <property type="match status" value="1"/>
</dbReference>
<dbReference type="HAMAP" id="MF_00374">
    <property type="entry name" value="Ribosomal_uL29"/>
    <property type="match status" value="1"/>
</dbReference>
<dbReference type="InterPro" id="IPR050063">
    <property type="entry name" value="Ribosomal_protein_uL29"/>
</dbReference>
<dbReference type="InterPro" id="IPR001854">
    <property type="entry name" value="Ribosomal_uL29"/>
</dbReference>
<dbReference type="InterPro" id="IPR036049">
    <property type="entry name" value="Ribosomal_uL29_sf"/>
</dbReference>
<dbReference type="NCBIfam" id="TIGR00012">
    <property type="entry name" value="L29"/>
    <property type="match status" value="1"/>
</dbReference>
<dbReference type="PANTHER" id="PTHR10916">
    <property type="entry name" value="60S RIBOSOMAL PROTEIN L35/50S RIBOSOMAL PROTEIN L29"/>
    <property type="match status" value="1"/>
</dbReference>
<dbReference type="PANTHER" id="PTHR10916:SF0">
    <property type="entry name" value="LARGE RIBOSOMAL SUBUNIT PROTEIN UL29C"/>
    <property type="match status" value="1"/>
</dbReference>
<dbReference type="Pfam" id="PF00831">
    <property type="entry name" value="Ribosomal_L29"/>
    <property type="match status" value="1"/>
</dbReference>
<dbReference type="SUPFAM" id="SSF46561">
    <property type="entry name" value="Ribosomal protein L29 (L29p)"/>
    <property type="match status" value="1"/>
</dbReference>
<protein>
    <recommendedName>
        <fullName evidence="1">Large ribosomal subunit protein uL29</fullName>
    </recommendedName>
    <alternativeName>
        <fullName evidence="2">50S ribosomal protein L29</fullName>
    </alternativeName>
</protein>
<accession>Q4A5C9</accession>
<reference key="1">
    <citation type="journal article" date="2005" name="J. Bacteriol.">
        <title>Swine and poultry pathogens: the complete genome sequences of two strains of Mycoplasma hyopneumoniae and a strain of Mycoplasma synoviae.</title>
        <authorList>
            <person name="Vasconcelos A.T.R."/>
            <person name="Ferreira H.B."/>
            <person name="Bizarro C.V."/>
            <person name="Bonatto S.L."/>
            <person name="Carvalho M.O."/>
            <person name="Pinto P.M."/>
            <person name="Almeida D.F."/>
            <person name="Almeida L.G.P."/>
            <person name="Almeida R."/>
            <person name="Alves-Junior L."/>
            <person name="Assuncao E.N."/>
            <person name="Azevedo V.A.C."/>
            <person name="Bogo M.R."/>
            <person name="Brigido M.M."/>
            <person name="Brocchi M."/>
            <person name="Burity H.A."/>
            <person name="Camargo A.A."/>
            <person name="Camargo S.S."/>
            <person name="Carepo M.S."/>
            <person name="Carraro D.M."/>
            <person name="de Mattos Cascardo J.C."/>
            <person name="Castro L.A."/>
            <person name="Cavalcanti G."/>
            <person name="Chemale G."/>
            <person name="Collevatti R.G."/>
            <person name="Cunha C.W."/>
            <person name="Dallagiovanna B."/>
            <person name="Dambros B.P."/>
            <person name="Dellagostin O.A."/>
            <person name="Falcao C."/>
            <person name="Fantinatti-Garboggini F."/>
            <person name="Felipe M.S.S."/>
            <person name="Fiorentin L."/>
            <person name="Franco G.R."/>
            <person name="Freitas N.S.A."/>
            <person name="Frias D."/>
            <person name="Grangeiro T.B."/>
            <person name="Grisard E.C."/>
            <person name="Guimaraes C.T."/>
            <person name="Hungria M."/>
            <person name="Jardim S.N."/>
            <person name="Krieger M.A."/>
            <person name="Laurino J.P."/>
            <person name="Lima L.F.A."/>
            <person name="Lopes M.I."/>
            <person name="Loreto E.L.S."/>
            <person name="Madeira H.M.F."/>
            <person name="Manfio G.P."/>
            <person name="Maranhao A.Q."/>
            <person name="Martinkovics C.T."/>
            <person name="Medeiros S.R.B."/>
            <person name="Moreira M.A.M."/>
            <person name="Neiva M."/>
            <person name="Ramalho-Neto C.E."/>
            <person name="Nicolas M.F."/>
            <person name="Oliveira S.C."/>
            <person name="Paixao R.F.C."/>
            <person name="Pedrosa F.O."/>
            <person name="Pena S.D.J."/>
            <person name="Pereira M."/>
            <person name="Pereira-Ferrari L."/>
            <person name="Piffer I."/>
            <person name="Pinto L.S."/>
            <person name="Potrich D.P."/>
            <person name="Salim A.C.M."/>
            <person name="Santos F.R."/>
            <person name="Schmitt R."/>
            <person name="Schneider M.P.C."/>
            <person name="Schrank A."/>
            <person name="Schrank I.S."/>
            <person name="Schuck A.F."/>
            <person name="Seuanez H.N."/>
            <person name="Silva D.W."/>
            <person name="Silva R."/>
            <person name="Silva S.C."/>
            <person name="Soares C.M.A."/>
            <person name="Souza K.R.L."/>
            <person name="Souza R.C."/>
            <person name="Staats C.C."/>
            <person name="Steffens M.B.R."/>
            <person name="Teixeira S.M.R."/>
            <person name="Urmenyi T.P."/>
            <person name="Vainstein M.H."/>
            <person name="Zuccherato L.W."/>
            <person name="Simpson A.J.G."/>
            <person name="Zaha A."/>
        </authorList>
    </citation>
    <scope>NUCLEOTIDE SEQUENCE [LARGE SCALE GENOMIC DNA]</scope>
    <source>
        <strain>53</strain>
    </source>
</reference>
<gene>
    <name evidence="1" type="primary">rpmC</name>
    <name type="ordered locus">MS53_0635</name>
</gene>
<feature type="chain" id="PRO_1000007531" description="Large ribosomal subunit protein uL29">
    <location>
        <begin position="1"/>
        <end position="65"/>
    </location>
</feature>
<keyword id="KW-1185">Reference proteome</keyword>
<keyword id="KW-0687">Ribonucleoprotein</keyword>
<keyword id="KW-0689">Ribosomal protein</keyword>
<sequence>MQFKEVKAKSVEELHKLVNDLKAELWTLEFRNSTGSLEQTHKIPQLRKDIARALTALKQKEMETK</sequence>
<evidence type="ECO:0000255" key="1">
    <source>
        <dbReference type="HAMAP-Rule" id="MF_00374"/>
    </source>
</evidence>
<evidence type="ECO:0000305" key="2"/>
<proteinExistence type="inferred from homology"/>
<name>RL29_MYCS5</name>
<organism>
    <name type="scientific">Mycoplasmopsis synoviae (strain 53)</name>
    <name type="common">Mycoplasma synoviae</name>
    <dbReference type="NCBI Taxonomy" id="262723"/>
    <lineage>
        <taxon>Bacteria</taxon>
        <taxon>Bacillati</taxon>
        <taxon>Mycoplasmatota</taxon>
        <taxon>Mycoplasmoidales</taxon>
        <taxon>Metamycoplasmataceae</taxon>
        <taxon>Mycoplasmopsis</taxon>
    </lineage>
</organism>